<reference key="1">
    <citation type="journal article" date="2001" name="Nature">
        <title>Genome sequence of Yersinia pestis, the causative agent of plague.</title>
        <authorList>
            <person name="Parkhill J."/>
            <person name="Wren B.W."/>
            <person name="Thomson N.R."/>
            <person name="Titball R.W."/>
            <person name="Holden M.T.G."/>
            <person name="Prentice M.B."/>
            <person name="Sebaihia M."/>
            <person name="James K.D."/>
            <person name="Churcher C.M."/>
            <person name="Mungall K.L."/>
            <person name="Baker S."/>
            <person name="Basham D."/>
            <person name="Bentley S.D."/>
            <person name="Brooks K."/>
            <person name="Cerdeno-Tarraga A.-M."/>
            <person name="Chillingworth T."/>
            <person name="Cronin A."/>
            <person name="Davies R.M."/>
            <person name="Davis P."/>
            <person name="Dougan G."/>
            <person name="Feltwell T."/>
            <person name="Hamlin N."/>
            <person name="Holroyd S."/>
            <person name="Jagels K."/>
            <person name="Karlyshev A.V."/>
            <person name="Leather S."/>
            <person name="Moule S."/>
            <person name="Oyston P.C.F."/>
            <person name="Quail M.A."/>
            <person name="Rutherford K.M."/>
            <person name="Simmonds M."/>
            <person name="Skelton J."/>
            <person name="Stevens K."/>
            <person name="Whitehead S."/>
            <person name="Barrell B.G."/>
        </authorList>
    </citation>
    <scope>NUCLEOTIDE SEQUENCE [LARGE SCALE GENOMIC DNA]</scope>
    <source>
        <strain>CO-92 / Biovar Orientalis</strain>
    </source>
</reference>
<reference key="2">
    <citation type="journal article" date="2002" name="J. Bacteriol.">
        <title>Genome sequence of Yersinia pestis KIM.</title>
        <authorList>
            <person name="Deng W."/>
            <person name="Burland V."/>
            <person name="Plunkett G. III"/>
            <person name="Boutin A."/>
            <person name="Mayhew G.F."/>
            <person name="Liss P."/>
            <person name="Perna N.T."/>
            <person name="Rose D.J."/>
            <person name="Mau B."/>
            <person name="Zhou S."/>
            <person name="Schwartz D.C."/>
            <person name="Fetherston J.D."/>
            <person name="Lindler L.E."/>
            <person name="Brubaker R.R."/>
            <person name="Plano G.V."/>
            <person name="Straley S.C."/>
            <person name="McDonough K.A."/>
            <person name="Nilles M.L."/>
            <person name="Matson J.S."/>
            <person name="Blattner F.R."/>
            <person name="Perry R.D."/>
        </authorList>
    </citation>
    <scope>NUCLEOTIDE SEQUENCE [LARGE SCALE GENOMIC DNA]</scope>
    <source>
        <strain>KIM10+ / Biovar Mediaevalis</strain>
    </source>
</reference>
<reference key="3">
    <citation type="journal article" date="2004" name="DNA Res.">
        <title>Complete genome sequence of Yersinia pestis strain 91001, an isolate avirulent to humans.</title>
        <authorList>
            <person name="Song Y."/>
            <person name="Tong Z."/>
            <person name="Wang J."/>
            <person name="Wang L."/>
            <person name="Guo Z."/>
            <person name="Han Y."/>
            <person name="Zhang J."/>
            <person name="Pei D."/>
            <person name="Zhou D."/>
            <person name="Qin H."/>
            <person name="Pang X."/>
            <person name="Han Y."/>
            <person name="Zhai J."/>
            <person name="Li M."/>
            <person name="Cui B."/>
            <person name="Qi Z."/>
            <person name="Jin L."/>
            <person name="Dai R."/>
            <person name="Chen F."/>
            <person name="Li S."/>
            <person name="Ye C."/>
            <person name="Du Z."/>
            <person name="Lin W."/>
            <person name="Wang J."/>
            <person name="Yu J."/>
            <person name="Yang H."/>
            <person name="Wang J."/>
            <person name="Huang P."/>
            <person name="Yang R."/>
        </authorList>
    </citation>
    <scope>NUCLEOTIDE SEQUENCE [LARGE SCALE GENOMIC DNA]</scope>
    <source>
        <strain>91001 / Biovar Mediaevalis</strain>
    </source>
</reference>
<evidence type="ECO:0000250" key="1">
    <source>
        <dbReference type="UniProtKB" id="P50389"/>
    </source>
</evidence>
<evidence type="ECO:0000255" key="2">
    <source>
        <dbReference type="HAMAP-Rule" id="MF_01627"/>
    </source>
</evidence>
<evidence type="ECO:0000305" key="3"/>
<comment type="function">
    <text evidence="2">Catalyzes the reversible phosphorolytic breakdown of the N-glycosidic bond in the beta-(deoxy)ribonucleoside molecules, with the formation of the corresponding free purine bases and pentose-1-phosphate.</text>
</comment>
<comment type="catalytic activity">
    <reaction evidence="2">
        <text>a purine D-ribonucleoside + phosphate = a purine nucleobase + alpha-D-ribose 1-phosphate</text>
        <dbReference type="Rhea" id="RHEA:19805"/>
        <dbReference type="ChEBI" id="CHEBI:26386"/>
        <dbReference type="ChEBI" id="CHEBI:43474"/>
        <dbReference type="ChEBI" id="CHEBI:57720"/>
        <dbReference type="ChEBI" id="CHEBI:142355"/>
        <dbReference type="EC" id="2.4.2.1"/>
    </reaction>
</comment>
<comment type="catalytic activity">
    <reaction evidence="2">
        <text>a purine 2'-deoxy-D-ribonucleoside + phosphate = a purine nucleobase + 2-deoxy-alpha-D-ribose 1-phosphate</text>
        <dbReference type="Rhea" id="RHEA:36431"/>
        <dbReference type="ChEBI" id="CHEBI:26386"/>
        <dbReference type="ChEBI" id="CHEBI:43474"/>
        <dbReference type="ChEBI" id="CHEBI:57259"/>
        <dbReference type="ChEBI" id="CHEBI:142361"/>
        <dbReference type="EC" id="2.4.2.1"/>
    </reaction>
</comment>
<comment type="subunit">
    <text evidence="2">Homohexamer; trimer of homodimers.</text>
</comment>
<comment type="similarity">
    <text evidence="2">Belongs to the PNP/UDP phosphorylase family.</text>
</comment>
<comment type="sequence caution" evidence="3">
    <conflict type="erroneous initiation">
        <sequence resource="EMBL-CDS" id="AAM87286"/>
    </conflict>
</comment>
<comment type="sequence caution" evidence="3">
    <conflict type="erroneous initiation">
        <sequence resource="EMBL-CDS" id="AAS63890"/>
    </conflict>
</comment>
<gene>
    <name evidence="2" type="primary">deoD</name>
    <name type="ordered locus">YPO0440</name>
    <name type="ordered locus">y3740</name>
    <name type="ordered locus">YP_3742</name>
</gene>
<proteinExistence type="inferred from homology"/>
<feature type="chain" id="PRO_0000063181" description="Purine nucleoside phosphorylase DeoD-type">
    <location>
        <begin position="1"/>
        <end position="239"/>
    </location>
</feature>
<feature type="active site" description="Proton donor" evidence="2">
    <location>
        <position position="205"/>
    </location>
</feature>
<feature type="binding site" evidence="1">
    <location>
        <position position="5"/>
    </location>
    <ligand>
        <name>a purine D-ribonucleoside</name>
        <dbReference type="ChEBI" id="CHEBI:142355"/>
        <note>ligand shared between dimeric partners</note>
    </ligand>
</feature>
<feature type="binding site" description="in other chain" evidence="1">
    <location>
        <position position="21"/>
    </location>
    <ligand>
        <name>phosphate</name>
        <dbReference type="ChEBI" id="CHEBI:43474"/>
        <note>ligand shared between dimeric partners</note>
    </ligand>
</feature>
<feature type="binding site" description="in other chain" evidence="1">
    <location>
        <position position="25"/>
    </location>
    <ligand>
        <name>phosphate</name>
        <dbReference type="ChEBI" id="CHEBI:43474"/>
        <note>ligand shared between dimeric partners</note>
    </ligand>
</feature>
<feature type="binding site" evidence="1">
    <location>
        <position position="44"/>
    </location>
    <ligand>
        <name>phosphate</name>
        <dbReference type="ChEBI" id="CHEBI:43474"/>
        <note>ligand shared between dimeric partners</note>
    </ligand>
</feature>
<feature type="binding site" description="in other chain" evidence="1">
    <location>
        <begin position="88"/>
        <end position="91"/>
    </location>
    <ligand>
        <name>phosphate</name>
        <dbReference type="ChEBI" id="CHEBI:43474"/>
        <note>ligand shared between dimeric partners</note>
    </ligand>
</feature>
<feature type="binding site" description="in other chain" evidence="1">
    <location>
        <begin position="180"/>
        <end position="182"/>
    </location>
    <ligand>
        <name>a purine D-ribonucleoside</name>
        <dbReference type="ChEBI" id="CHEBI:142355"/>
        <note>ligand shared between dimeric partners</note>
    </ligand>
</feature>
<feature type="binding site" description="in other chain" evidence="1">
    <location>
        <begin position="204"/>
        <end position="205"/>
    </location>
    <ligand>
        <name>a purine D-ribonucleoside</name>
        <dbReference type="ChEBI" id="CHEBI:142355"/>
        <note>ligand shared between dimeric partners</note>
    </ligand>
</feature>
<feature type="site" description="Important for catalytic activity" evidence="2">
    <location>
        <position position="218"/>
    </location>
</feature>
<accession>Q8ZIQ2</accession>
<accession>Q0WJM4</accession>
<accession>Q74PY9</accession>
<accession>Q8CZN9</accession>
<keyword id="KW-0328">Glycosyltransferase</keyword>
<keyword id="KW-1185">Reference proteome</keyword>
<keyword id="KW-0808">Transferase</keyword>
<dbReference type="EC" id="2.4.2.1" evidence="2"/>
<dbReference type="EMBL" id="AL590842">
    <property type="protein sequence ID" value="CAL19120.1"/>
    <property type="molecule type" value="Genomic_DNA"/>
</dbReference>
<dbReference type="EMBL" id="AE009952">
    <property type="protein sequence ID" value="AAM87286.1"/>
    <property type="status" value="ALT_INIT"/>
    <property type="molecule type" value="Genomic_DNA"/>
</dbReference>
<dbReference type="EMBL" id="AE017042">
    <property type="protein sequence ID" value="AAS63890.1"/>
    <property type="status" value="ALT_INIT"/>
    <property type="molecule type" value="Genomic_DNA"/>
</dbReference>
<dbReference type="PIR" id="AF0054">
    <property type="entry name" value="AF0054"/>
</dbReference>
<dbReference type="RefSeq" id="WP_002209217.1">
    <property type="nucleotide sequence ID" value="NZ_WUCM01000002.1"/>
</dbReference>
<dbReference type="RefSeq" id="YP_002345514.1">
    <property type="nucleotide sequence ID" value="NC_003143.1"/>
</dbReference>
<dbReference type="SMR" id="Q8ZIQ2"/>
<dbReference type="STRING" id="214092.YPO0440"/>
<dbReference type="PaxDb" id="214092-YPO0440"/>
<dbReference type="DNASU" id="1148687"/>
<dbReference type="EnsemblBacteria" id="AAS63890">
    <property type="protein sequence ID" value="AAS63890"/>
    <property type="gene ID" value="YP_3742"/>
</dbReference>
<dbReference type="GeneID" id="57974168"/>
<dbReference type="KEGG" id="ype:YPO0440"/>
<dbReference type="KEGG" id="ypk:y3740"/>
<dbReference type="KEGG" id="ypm:YP_3742"/>
<dbReference type="PATRIC" id="fig|214092.21.peg.684"/>
<dbReference type="eggNOG" id="COG0813">
    <property type="taxonomic scope" value="Bacteria"/>
</dbReference>
<dbReference type="HOGENOM" id="CLU_068457_2_0_6"/>
<dbReference type="OMA" id="PQCLLCG"/>
<dbReference type="OrthoDB" id="9782889at2"/>
<dbReference type="Proteomes" id="UP000000815">
    <property type="component" value="Chromosome"/>
</dbReference>
<dbReference type="Proteomes" id="UP000001019">
    <property type="component" value="Chromosome"/>
</dbReference>
<dbReference type="Proteomes" id="UP000002490">
    <property type="component" value="Chromosome"/>
</dbReference>
<dbReference type="GO" id="GO:0005829">
    <property type="term" value="C:cytosol"/>
    <property type="evidence" value="ECO:0000318"/>
    <property type="project" value="GO_Central"/>
</dbReference>
<dbReference type="GO" id="GO:0004731">
    <property type="term" value="F:purine-nucleoside phosphorylase activity"/>
    <property type="evidence" value="ECO:0000318"/>
    <property type="project" value="GO_Central"/>
</dbReference>
<dbReference type="GO" id="GO:0006152">
    <property type="term" value="P:purine nucleoside catabolic process"/>
    <property type="evidence" value="ECO:0000318"/>
    <property type="project" value="GO_Central"/>
</dbReference>
<dbReference type="CDD" id="cd09006">
    <property type="entry name" value="PNP_EcPNPI-like"/>
    <property type="match status" value="1"/>
</dbReference>
<dbReference type="FunFam" id="3.40.50.1580:FF:000002">
    <property type="entry name" value="Purine nucleoside phosphorylase DeoD-type"/>
    <property type="match status" value="1"/>
</dbReference>
<dbReference type="Gene3D" id="3.40.50.1580">
    <property type="entry name" value="Nucleoside phosphorylase domain"/>
    <property type="match status" value="1"/>
</dbReference>
<dbReference type="HAMAP" id="MF_01627">
    <property type="entry name" value="Pur_nucleosid_phosp"/>
    <property type="match status" value="1"/>
</dbReference>
<dbReference type="InterPro" id="IPR004402">
    <property type="entry name" value="DeoD-type"/>
</dbReference>
<dbReference type="InterPro" id="IPR018016">
    <property type="entry name" value="Nucleoside_phosphorylase_CS"/>
</dbReference>
<dbReference type="InterPro" id="IPR000845">
    <property type="entry name" value="Nucleoside_phosphorylase_d"/>
</dbReference>
<dbReference type="InterPro" id="IPR035994">
    <property type="entry name" value="Nucleoside_phosphorylase_sf"/>
</dbReference>
<dbReference type="NCBIfam" id="TIGR00107">
    <property type="entry name" value="deoD"/>
    <property type="match status" value="1"/>
</dbReference>
<dbReference type="NCBIfam" id="NF004489">
    <property type="entry name" value="PRK05819.1"/>
    <property type="match status" value="1"/>
</dbReference>
<dbReference type="NCBIfam" id="NF009914">
    <property type="entry name" value="PRK13374.1"/>
    <property type="match status" value="1"/>
</dbReference>
<dbReference type="PANTHER" id="PTHR43691:SF2">
    <property type="entry name" value="PURINE NUCLEOSIDE PHOSPHORYLASE DEOD-TYPE"/>
    <property type="match status" value="1"/>
</dbReference>
<dbReference type="PANTHER" id="PTHR43691">
    <property type="entry name" value="URIDINE PHOSPHORYLASE"/>
    <property type="match status" value="1"/>
</dbReference>
<dbReference type="Pfam" id="PF01048">
    <property type="entry name" value="PNP_UDP_1"/>
    <property type="match status" value="1"/>
</dbReference>
<dbReference type="SUPFAM" id="SSF53167">
    <property type="entry name" value="Purine and uridine phosphorylases"/>
    <property type="match status" value="1"/>
</dbReference>
<dbReference type="PROSITE" id="PS01232">
    <property type="entry name" value="PNP_UDP_1"/>
    <property type="match status" value="1"/>
</dbReference>
<organism>
    <name type="scientific">Yersinia pestis</name>
    <dbReference type="NCBI Taxonomy" id="632"/>
    <lineage>
        <taxon>Bacteria</taxon>
        <taxon>Pseudomonadati</taxon>
        <taxon>Pseudomonadota</taxon>
        <taxon>Gammaproteobacteria</taxon>
        <taxon>Enterobacterales</taxon>
        <taxon>Yersiniaceae</taxon>
        <taxon>Yersinia</taxon>
    </lineage>
</organism>
<protein>
    <recommendedName>
        <fullName evidence="2">Purine nucleoside phosphorylase DeoD-type</fullName>
        <shortName evidence="2">PNP</shortName>
        <ecNumber evidence="2">2.4.2.1</ecNumber>
    </recommendedName>
</protein>
<sequence>MATPHINAEMGDFADVVLMPGDPLRAKFIAETFLQDVREVNNVRGMLGFTGTYKGRKISVMGHGMGIPSCSIYAKELITDFGVKKIIRVGSCGAVRTDVKLRDVVIGMGACTDSKVNRMRFKDHDYAAIADFEMTRNAVDAAKAKGVNVRVGNLFSADLFYTPDPQMFDVMEKYGILGVEMEAAGICGVAAEFGAKALTICTVSDHIRTGEQTTAAERQTTFNDMIEIALESVLLGDNA</sequence>
<name>DEOD_YERPE</name>